<proteinExistence type="evidence at protein level"/>
<gene>
    <name type="primary">divL</name>
    <name type="ordered locus">CC_3484</name>
</gene>
<keyword id="KW-0002">3D-structure</keyword>
<keyword id="KW-0067">ATP-binding</keyword>
<keyword id="KW-1003">Cell membrane</keyword>
<keyword id="KW-0418">Kinase</keyword>
<keyword id="KW-0472">Membrane</keyword>
<keyword id="KW-0547">Nucleotide-binding</keyword>
<keyword id="KW-0597">Phosphoprotein</keyword>
<keyword id="KW-1185">Reference proteome</keyword>
<keyword id="KW-0808">Transferase</keyword>
<keyword id="KW-0812">Transmembrane</keyword>
<keyword id="KW-1133">Transmembrane helix</keyword>
<keyword id="KW-0902">Two-component regulatory system</keyword>
<name>DIVL_CAUVC</name>
<sequence>MTSYDLILAAAAGAVCLAISVALWSHGQRRNLEARIVALKTRLIQQGGSDDAPAWLDAFDTAVIAVEGGRANLVAGGEGLIACAKALGADAEVSAVVAALSDADPNYAQKLTALFERGEPCVFEARGPHGLVSVEGRAAGALAWLRLAPIDRADSGLPTAARFAAFVDSVVEPCWIAGADGQAIWGNAAFVRAVGAASAQAPALAGKSFDRGADAVVVEAAGKGERREALRWINVEGRRRAFRLSAQPLDGGGVGVFCADVTEIEDVRDAFKKHVEAHDETLNHIAEAVAIFSQTRRLSYHNTAFAELWGLEPAWLADRPTHGEVLDRLRQRRRLPETIDYAGWKAAELARYEDLGPQADDLWDLPDGRTLKVVRQPHPLGGMLLIYSDITGELRLKAQYNALIQVQQATLDKLNDAVAVFGSDGRLRLHNEAFETFWNVTPHALEAAGDFEGVVELCVPRLHDLSFWRELKGRVADPDPQMRAPTSGEVRTSDSRIVLYQSRPLPDGATLIAFADVTDTRDLQSALADRSAALAEAERLKRDFVGNVSYELRTPLTTIIGYSELLERADGISERGRNHVAAVRAAATQLARSIDDVLDMAQIDAGEMALEIEDIRVSDLLLNAQERALKDAQLGGVTLAVECEEDVGLIRGDGKRLAQTLDHLVENALRQTPPGGRVTLSARRALGEVRLDVSDTGRGVPFHVQAHIFDRFVGRDRGGPGLGLALVKALVELHGGWVALESEPGNGSTFTCHLPETQQPGAMQPELGF</sequence>
<accession>Q9RQQ9</accession>
<accession>Q9A2S2</accession>
<comment type="function">
    <text>Required for cell division and growth. It catalyzes the phosphorylation of CtrA and activates transcription in vitro of the cell cycle-regulated fliF promoter.</text>
</comment>
<comment type="catalytic activity">
    <reaction>
        <text>ATP + protein L-histidine = ADP + protein N-phospho-L-histidine.</text>
        <dbReference type="EC" id="2.7.13.3"/>
    </reaction>
</comment>
<comment type="subcellular location">
    <subcellularLocation>
        <location>Cell membrane</location>
        <topology>Single-pass membrane protein</topology>
    </subcellularLocation>
</comment>
<comment type="PTM">
    <text evidence="3">Autophosphorylated.</text>
</comment>
<protein>
    <recommendedName>
        <fullName>Sensor protein DivL</fullName>
        <ecNumber>2.7.13.3</ecNumber>
    </recommendedName>
</protein>
<evidence type="ECO:0000255" key="1"/>
<evidence type="ECO:0000255" key="2">
    <source>
        <dbReference type="PROSITE-ProRule" id="PRU00107"/>
    </source>
</evidence>
<evidence type="ECO:0000269" key="3">
    <source>
    </source>
</evidence>
<evidence type="ECO:0000305" key="4"/>
<evidence type="ECO:0007829" key="5">
    <source>
        <dbReference type="PDB" id="4Q20"/>
    </source>
</evidence>
<organism>
    <name type="scientific">Caulobacter vibrioides (strain ATCC 19089 / CIP 103742 / CB 15)</name>
    <name type="common">Caulobacter crescentus</name>
    <dbReference type="NCBI Taxonomy" id="190650"/>
    <lineage>
        <taxon>Bacteria</taxon>
        <taxon>Pseudomonadati</taxon>
        <taxon>Pseudomonadota</taxon>
        <taxon>Alphaproteobacteria</taxon>
        <taxon>Caulobacterales</taxon>
        <taxon>Caulobacteraceae</taxon>
        <taxon>Caulobacter</taxon>
    </lineage>
</organism>
<reference key="1">
    <citation type="journal article" date="1999" name="Proc. Natl. Acad. Sci. U.S.A.">
        <title>A novel bacterial tyrosine kinase essential for cell division and differentiation.</title>
        <authorList>
            <person name="Wu J."/>
            <person name="Ohta N."/>
            <person name="Zhao J.L."/>
            <person name="Newton A."/>
        </authorList>
    </citation>
    <scope>NUCLEOTIDE SEQUENCE [GENOMIC DNA]</scope>
    <scope>PHOSPHORYLATION AT TYR-550</scope>
    <source>
        <strain>ATCC 19089 / CIP 103742 / CB 15</strain>
    </source>
</reference>
<reference key="2">
    <citation type="journal article" date="2001" name="Proc. Natl. Acad. Sci. U.S.A.">
        <title>Complete genome sequence of Caulobacter crescentus.</title>
        <authorList>
            <person name="Nierman W.C."/>
            <person name="Feldblyum T.V."/>
            <person name="Laub M.T."/>
            <person name="Paulsen I.T."/>
            <person name="Nelson K.E."/>
            <person name="Eisen J.A."/>
            <person name="Heidelberg J.F."/>
            <person name="Alley M.R.K."/>
            <person name="Ohta N."/>
            <person name="Maddock J.R."/>
            <person name="Potocka I."/>
            <person name="Nelson W.C."/>
            <person name="Newton A."/>
            <person name="Stephens C."/>
            <person name="Phadke N.D."/>
            <person name="Ely B."/>
            <person name="DeBoy R.T."/>
            <person name="Dodson R.J."/>
            <person name="Durkin A.S."/>
            <person name="Gwinn M.L."/>
            <person name="Haft D.H."/>
            <person name="Kolonay J.F."/>
            <person name="Smit J."/>
            <person name="Craven M.B."/>
            <person name="Khouri H.M."/>
            <person name="Shetty J."/>
            <person name="Berry K.J."/>
            <person name="Utterback T.R."/>
            <person name="Tran K."/>
            <person name="Wolf A.M."/>
            <person name="Vamathevan J.J."/>
            <person name="Ermolaeva M.D."/>
            <person name="White O."/>
            <person name="Salzberg S.L."/>
            <person name="Venter J.C."/>
            <person name="Shapiro L."/>
            <person name="Fraser C.M."/>
        </authorList>
    </citation>
    <scope>NUCLEOTIDE SEQUENCE [LARGE SCALE GENOMIC DNA]</scope>
    <source>
        <strain>ATCC 19089 / CIP 103742 / CB 15</strain>
    </source>
</reference>
<reference key="3">
    <citation type="submission" date="2013-04" db="PDB data bank">
        <title>Crystal structure of a C-terminal part of tyrosine kinase (DivL) from Caulobacter crescentus CB15 at 2.50 A resolution (PSI community target, Shapiro L.).</title>
        <authorList>
            <consortium name="Joint center for structural genomics (JCSG)"/>
        </authorList>
    </citation>
    <scope>X-RAY CRYSTALLOGRAPHY (2.5 ANGSTROMS) OF 523-769</scope>
    <source>
        <strain>ATCC 19089 / CIP 103742 / CB 15</strain>
    </source>
</reference>
<feature type="chain" id="PRO_0000074729" description="Sensor protein DivL">
    <location>
        <begin position="1"/>
        <end position="769"/>
    </location>
</feature>
<feature type="transmembrane region" description="Helical" evidence="1">
    <location>
        <begin position="6"/>
        <end position="26"/>
    </location>
</feature>
<feature type="domain" description="Histidine kinase" evidence="2">
    <location>
        <begin position="547"/>
        <end position="758"/>
    </location>
</feature>
<feature type="modified residue" description="Phosphotyrosine; by autocatalysis" evidence="3">
    <location>
        <position position="550"/>
    </location>
</feature>
<feature type="sequence conflict" description="In Ref. 1; AAF08344." evidence="4" ref="1">
    <original>Q</original>
    <variation>H</variation>
    <location>
        <position position="200"/>
    </location>
</feature>
<feature type="sequence conflict" description="In Ref. 1; AAF08344." evidence="4" ref="1">
    <original>V</original>
    <variation>E</variation>
    <location>
        <position position="216"/>
    </location>
</feature>
<feature type="helix" evidence="5">
    <location>
        <begin position="527"/>
        <end position="567"/>
    </location>
</feature>
<feature type="helix" evidence="5">
    <location>
        <begin position="574"/>
        <end position="604"/>
    </location>
</feature>
<feature type="strand" evidence="5">
    <location>
        <begin position="613"/>
        <end position="616"/>
    </location>
</feature>
<feature type="helix" evidence="5">
    <location>
        <begin position="617"/>
        <end position="634"/>
    </location>
</feature>
<feature type="strand" evidence="5">
    <location>
        <begin position="638"/>
        <end position="642"/>
    </location>
</feature>
<feature type="helix" evidence="5">
    <location>
        <begin position="645"/>
        <end position="647"/>
    </location>
</feature>
<feature type="strand" evidence="5">
    <location>
        <begin position="649"/>
        <end position="652"/>
    </location>
</feature>
<feature type="helix" evidence="5">
    <location>
        <begin position="654"/>
        <end position="671"/>
    </location>
</feature>
<feature type="strand" evidence="5">
    <location>
        <begin position="677"/>
        <end position="684"/>
    </location>
</feature>
<feature type="strand" evidence="5">
    <location>
        <begin position="686"/>
        <end position="697"/>
    </location>
</feature>
<feature type="helix" evidence="5">
    <location>
        <begin position="702"/>
        <end position="705"/>
    </location>
</feature>
<feature type="turn" evidence="5">
    <location>
        <begin position="706"/>
        <end position="709"/>
    </location>
</feature>
<feature type="helix" evidence="5">
    <location>
        <begin position="723"/>
        <end position="733"/>
    </location>
</feature>
<feature type="strand" evidence="5">
    <location>
        <begin position="737"/>
        <end position="742"/>
    </location>
</feature>
<feature type="strand" evidence="5">
    <location>
        <begin position="748"/>
        <end position="755"/>
    </location>
</feature>
<dbReference type="EC" id="2.7.13.3"/>
<dbReference type="EMBL" id="AF083422">
    <property type="protein sequence ID" value="AAF08344.2"/>
    <property type="molecule type" value="Genomic_DNA"/>
</dbReference>
<dbReference type="EMBL" id="AE005673">
    <property type="protein sequence ID" value="AAK25446.1"/>
    <property type="molecule type" value="Genomic_DNA"/>
</dbReference>
<dbReference type="PIR" id="B87681">
    <property type="entry name" value="B87681"/>
</dbReference>
<dbReference type="RefSeq" id="NP_422278.1">
    <property type="nucleotide sequence ID" value="NC_002696.2"/>
</dbReference>
<dbReference type="RefSeq" id="WP_010921313.1">
    <property type="nucleotide sequence ID" value="NC_002696.2"/>
</dbReference>
<dbReference type="PDB" id="4Q20">
    <property type="method" value="X-ray"/>
    <property type="resolution" value="2.50 A"/>
    <property type="chains" value="A/B=523-769"/>
</dbReference>
<dbReference type="PDBsum" id="4Q20"/>
<dbReference type="SMR" id="Q9RQQ9"/>
<dbReference type="STRING" id="190650.CC_3484"/>
<dbReference type="iPTMnet" id="Q9RQQ9"/>
<dbReference type="EnsemblBacteria" id="AAK25446">
    <property type="protein sequence ID" value="AAK25446"/>
    <property type="gene ID" value="CC_3484"/>
</dbReference>
<dbReference type="KEGG" id="ccr:CC_3484"/>
<dbReference type="PATRIC" id="fig|190650.5.peg.3494"/>
<dbReference type="eggNOG" id="COG2205">
    <property type="taxonomic scope" value="Bacteria"/>
</dbReference>
<dbReference type="HOGENOM" id="CLU_018130_0_0_5"/>
<dbReference type="BioCyc" id="CAULO:CC3484-MONOMER"/>
<dbReference type="BRENDA" id="2.7.13.3">
    <property type="organism ID" value="1218"/>
</dbReference>
<dbReference type="EvolutionaryTrace" id="Q9RQQ9"/>
<dbReference type="Proteomes" id="UP000001816">
    <property type="component" value="Chromosome"/>
</dbReference>
<dbReference type="GO" id="GO:0005886">
    <property type="term" value="C:plasma membrane"/>
    <property type="evidence" value="ECO:0007669"/>
    <property type="project" value="UniProtKB-SubCell"/>
</dbReference>
<dbReference type="GO" id="GO:0005524">
    <property type="term" value="F:ATP binding"/>
    <property type="evidence" value="ECO:0007669"/>
    <property type="project" value="UniProtKB-KW"/>
</dbReference>
<dbReference type="GO" id="GO:0000155">
    <property type="term" value="F:phosphorelay sensor kinase activity"/>
    <property type="evidence" value="ECO:0007669"/>
    <property type="project" value="InterPro"/>
</dbReference>
<dbReference type="CDD" id="cd00075">
    <property type="entry name" value="HATPase"/>
    <property type="match status" value="1"/>
</dbReference>
<dbReference type="CDD" id="cd00082">
    <property type="entry name" value="HisKA"/>
    <property type="match status" value="1"/>
</dbReference>
<dbReference type="FunFam" id="1.10.287.130:FF:000103">
    <property type="entry name" value="Two-component sensor histidine kinase"/>
    <property type="match status" value="1"/>
</dbReference>
<dbReference type="Gene3D" id="1.10.287.130">
    <property type="match status" value="1"/>
</dbReference>
<dbReference type="Gene3D" id="3.30.565.10">
    <property type="entry name" value="Histidine kinase-like ATPase, C-terminal domain"/>
    <property type="match status" value="1"/>
</dbReference>
<dbReference type="InterPro" id="IPR036890">
    <property type="entry name" value="HATPase_C_sf"/>
</dbReference>
<dbReference type="InterPro" id="IPR005467">
    <property type="entry name" value="His_kinase_dom"/>
</dbReference>
<dbReference type="InterPro" id="IPR003661">
    <property type="entry name" value="HisK_dim/P_dom"/>
</dbReference>
<dbReference type="InterPro" id="IPR036097">
    <property type="entry name" value="HisK_dim/P_sf"/>
</dbReference>
<dbReference type="InterPro" id="IPR035965">
    <property type="entry name" value="PAS-like_dom_sf"/>
</dbReference>
<dbReference type="InterPro" id="IPR050736">
    <property type="entry name" value="Sensor_HK_Regulatory"/>
</dbReference>
<dbReference type="InterPro" id="IPR004358">
    <property type="entry name" value="Sig_transdc_His_kin-like_C"/>
</dbReference>
<dbReference type="PANTHER" id="PTHR43711:SF1">
    <property type="entry name" value="HISTIDINE KINASE 1"/>
    <property type="match status" value="1"/>
</dbReference>
<dbReference type="PANTHER" id="PTHR43711">
    <property type="entry name" value="TWO-COMPONENT HISTIDINE KINASE"/>
    <property type="match status" value="1"/>
</dbReference>
<dbReference type="Pfam" id="PF02518">
    <property type="entry name" value="HATPase_c"/>
    <property type="match status" value="1"/>
</dbReference>
<dbReference type="Pfam" id="PF00512">
    <property type="entry name" value="HisKA"/>
    <property type="match status" value="1"/>
</dbReference>
<dbReference type="Pfam" id="PF12860">
    <property type="entry name" value="PAS_7"/>
    <property type="match status" value="2"/>
</dbReference>
<dbReference type="PRINTS" id="PR00344">
    <property type="entry name" value="BCTRLSENSOR"/>
</dbReference>
<dbReference type="SMART" id="SM00387">
    <property type="entry name" value="HATPase_c"/>
    <property type="match status" value="1"/>
</dbReference>
<dbReference type="SMART" id="SM00388">
    <property type="entry name" value="HisKA"/>
    <property type="match status" value="1"/>
</dbReference>
<dbReference type="SUPFAM" id="SSF55874">
    <property type="entry name" value="ATPase domain of HSP90 chaperone/DNA topoisomerase II/histidine kinase"/>
    <property type="match status" value="1"/>
</dbReference>
<dbReference type="SUPFAM" id="SSF47384">
    <property type="entry name" value="Homodimeric domain of signal transducing histidine kinase"/>
    <property type="match status" value="1"/>
</dbReference>
<dbReference type="SUPFAM" id="SSF55785">
    <property type="entry name" value="PYP-like sensor domain (PAS domain)"/>
    <property type="match status" value="2"/>
</dbReference>
<dbReference type="PROSITE" id="PS50109">
    <property type="entry name" value="HIS_KIN"/>
    <property type="match status" value="1"/>
</dbReference>